<dbReference type="EC" id="2.4.1.182" evidence="1"/>
<dbReference type="EMBL" id="BX571965">
    <property type="protein sequence ID" value="CAH36148.1"/>
    <property type="molecule type" value="Genomic_DNA"/>
</dbReference>
<dbReference type="RefSeq" id="WP_011205135.1">
    <property type="nucleotide sequence ID" value="NZ_CP009538.1"/>
</dbReference>
<dbReference type="RefSeq" id="YP_108741.1">
    <property type="nucleotide sequence ID" value="NC_006350.1"/>
</dbReference>
<dbReference type="SMR" id="Q63T25"/>
<dbReference type="STRING" id="272560.BPSL2146"/>
<dbReference type="KEGG" id="bps:BPSL2146"/>
<dbReference type="PATRIC" id="fig|272560.51.peg.3307"/>
<dbReference type="eggNOG" id="COG0763">
    <property type="taxonomic scope" value="Bacteria"/>
</dbReference>
<dbReference type="UniPathway" id="UPA00973"/>
<dbReference type="Proteomes" id="UP000000605">
    <property type="component" value="Chromosome 1"/>
</dbReference>
<dbReference type="GO" id="GO:0016020">
    <property type="term" value="C:membrane"/>
    <property type="evidence" value="ECO:0007669"/>
    <property type="project" value="GOC"/>
</dbReference>
<dbReference type="GO" id="GO:0008915">
    <property type="term" value="F:lipid-A-disaccharide synthase activity"/>
    <property type="evidence" value="ECO:0007669"/>
    <property type="project" value="UniProtKB-UniRule"/>
</dbReference>
<dbReference type="GO" id="GO:0005543">
    <property type="term" value="F:phospholipid binding"/>
    <property type="evidence" value="ECO:0007669"/>
    <property type="project" value="TreeGrafter"/>
</dbReference>
<dbReference type="GO" id="GO:0009245">
    <property type="term" value="P:lipid A biosynthetic process"/>
    <property type="evidence" value="ECO:0007669"/>
    <property type="project" value="UniProtKB-UniRule"/>
</dbReference>
<dbReference type="HAMAP" id="MF_00392">
    <property type="entry name" value="LpxB"/>
    <property type="match status" value="1"/>
</dbReference>
<dbReference type="InterPro" id="IPR003835">
    <property type="entry name" value="Glyco_trans_19"/>
</dbReference>
<dbReference type="NCBIfam" id="TIGR00215">
    <property type="entry name" value="lpxB"/>
    <property type="match status" value="1"/>
</dbReference>
<dbReference type="PANTHER" id="PTHR30372">
    <property type="entry name" value="LIPID-A-DISACCHARIDE SYNTHASE"/>
    <property type="match status" value="1"/>
</dbReference>
<dbReference type="PANTHER" id="PTHR30372:SF4">
    <property type="entry name" value="LIPID-A-DISACCHARIDE SYNTHASE, MITOCHONDRIAL-RELATED"/>
    <property type="match status" value="1"/>
</dbReference>
<dbReference type="Pfam" id="PF02684">
    <property type="entry name" value="LpxB"/>
    <property type="match status" value="1"/>
</dbReference>
<dbReference type="SUPFAM" id="SSF53756">
    <property type="entry name" value="UDP-Glycosyltransferase/glycogen phosphorylase"/>
    <property type="match status" value="1"/>
</dbReference>
<name>LPXB_BURPS</name>
<keyword id="KW-0328">Glycosyltransferase</keyword>
<keyword id="KW-0441">Lipid A biosynthesis</keyword>
<keyword id="KW-0444">Lipid biosynthesis</keyword>
<keyword id="KW-0443">Lipid metabolism</keyword>
<keyword id="KW-1185">Reference proteome</keyword>
<keyword id="KW-0808">Transferase</keyword>
<accession>Q63T25</accession>
<protein>
    <recommendedName>
        <fullName evidence="1">Lipid-A-disaccharide synthase</fullName>
        <ecNumber evidence="1">2.4.1.182</ecNumber>
    </recommendedName>
</protein>
<reference key="1">
    <citation type="journal article" date="2004" name="Proc. Natl. Acad. Sci. U.S.A.">
        <title>Genomic plasticity of the causative agent of melioidosis, Burkholderia pseudomallei.</title>
        <authorList>
            <person name="Holden M.T.G."/>
            <person name="Titball R.W."/>
            <person name="Peacock S.J."/>
            <person name="Cerdeno-Tarraga A.-M."/>
            <person name="Atkins T."/>
            <person name="Crossman L.C."/>
            <person name="Pitt T."/>
            <person name="Churcher C."/>
            <person name="Mungall K.L."/>
            <person name="Bentley S.D."/>
            <person name="Sebaihia M."/>
            <person name="Thomson N.R."/>
            <person name="Bason N."/>
            <person name="Beacham I.R."/>
            <person name="Brooks K."/>
            <person name="Brown K.A."/>
            <person name="Brown N.F."/>
            <person name="Challis G.L."/>
            <person name="Cherevach I."/>
            <person name="Chillingworth T."/>
            <person name="Cronin A."/>
            <person name="Crossett B."/>
            <person name="Davis P."/>
            <person name="DeShazer D."/>
            <person name="Feltwell T."/>
            <person name="Fraser A."/>
            <person name="Hance Z."/>
            <person name="Hauser H."/>
            <person name="Holroyd S."/>
            <person name="Jagels K."/>
            <person name="Keith K.E."/>
            <person name="Maddison M."/>
            <person name="Moule S."/>
            <person name="Price C."/>
            <person name="Quail M.A."/>
            <person name="Rabbinowitsch E."/>
            <person name="Rutherford K."/>
            <person name="Sanders M."/>
            <person name="Simmonds M."/>
            <person name="Songsivilai S."/>
            <person name="Stevens K."/>
            <person name="Tumapa S."/>
            <person name="Vesaratchavest M."/>
            <person name="Whitehead S."/>
            <person name="Yeats C."/>
            <person name="Barrell B.G."/>
            <person name="Oyston P.C.F."/>
            <person name="Parkhill J."/>
        </authorList>
    </citation>
    <scope>NUCLEOTIDE SEQUENCE [LARGE SCALE GENOMIC DNA]</scope>
    <source>
        <strain>K96243</strain>
    </source>
</reference>
<comment type="function">
    <text evidence="1">Condensation of UDP-2,3-diacylglucosamine and 2,3-diacylglucosamine-1-phosphate to form lipid A disaccharide, a precursor of lipid A, a phosphorylated glycolipid that anchors the lipopolysaccharide to the outer membrane of the cell.</text>
</comment>
<comment type="catalytic activity">
    <reaction evidence="1">
        <text>a lipid X + a UDP-2-N,3-O-bis[(3R)-3-hydroxyacyl]-alpha-D-glucosamine = a lipid A disaccharide + UDP + H(+)</text>
        <dbReference type="Rhea" id="RHEA:67828"/>
        <dbReference type="ChEBI" id="CHEBI:15378"/>
        <dbReference type="ChEBI" id="CHEBI:58223"/>
        <dbReference type="ChEBI" id="CHEBI:137748"/>
        <dbReference type="ChEBI" id="CHEBI:176338"/>
        <dbReference type="ChEBI" id="CHEBI:176343"/>
        <dbReference type="EC" id="2.4.1.182"/>
    </reaction>
</comment>
<comment type="pathway">
    <text evidence="1">Bacterial outer membrane biogenesis; LPS lipid A biosynthesis.</text>
</comment>
<comment type="similarity">
    <text evidence="1">Belongs to the LpxB family.</text>
</comment>
<gene>
    <name evidence="1" type="primary">lpxB</name>
    <name type="ordered locus">BPSL2146</name>
</gene>
<organism>
    <name type="scientific">Burkholderia pseudomallei (strain K96243)</name>
    <dbReference type="NCBI Taxonomy" id="272560"/>
    <lineage>
        <taxon>Bacteria</taxon>
        <taxon>Pseudomonadati</taxon>
        <taxon>Pseudomonadota</taxon>
        <taxon>Betaproteobacteria</taxon>
        <taxon>Burkholderiales</taxon>
        <taxon>Burkholderiaceae</taxon>
        <taxon>Burkholderia</taxon>
        <taxon>pseudomallei group</taxon>
    </lineage>
</organism>
<feature type="chain" id="PRO_0000255165" description="Lipid-A-disaccharide synthase">
    <location>
        <begin position="1"/>
        <end position="388"/>
    </location>
</feature>
<sequence>MAFQLTPLRVALVAGEPSGDLLGASLLGGLHARLPASSRYYGIGGPRMSAVEFDAHWPMEKLAVRGYVEALKHIPEILRIRGELKRQLLAEPPDAFVGIDAPDFNFGLEQALRGAGIPTIHFVCPSIWAWRGGRIKKIVKAVDHMLCLFPFEPELLEKAGVAATFVGHPLADEIPLEPDTHGARIALGLPDGGPVIAVLPGSRRSEIELIGPTFFDAMELMQQREPGVRFVVPAATPVLRALLQPLVDAHPSLSVTLTEGRAQVAMTAADAILVKSGTVTLEAALLKKPMVISYKVPWLTGQIMRRQGYLPYVGLPNILAGRFVVPELLQHFATPDALADATLTQLRDDANRRALTDIFTDMHLALRQNTAQRAAEAVARVIDSRKPR</sequence>
<evidence type="ECO:0000255" key="1">
    <source>
        <dbReference type="HAMAP-Rule" id="MF_00392"/>
    </source>
</evidence>
<proteinExistence type="inferred from homology"/>